<comment type="function">
    <text evidence="7 9 10 11 12 13 14 16 17">Catalytic component of a P4-ATPase flippase complex which catalyzes the hydrolysis of ATP coupled to the transport of aminophospholipids, phosphatidylserines (PS) and phosphatidylethanolamines (PE), from the outer to the inner leaflet of the plasma membrane (PubMed:25315773, PubMed:25947375, PubMed:26567335, PubMed:29799007, PubMed:30018401, PubMed:36300302). Does not show flippase activity toward phosphatidylcholine (PC) (PubMed:34403372). Contributes to the maintenance of membrane lipid asymmetry with a specific role in morphogenesis of muscle cells. In myoblasts, mediates PS enrichment at the inner leaflet of plasma membrane, triggering PIEZO1-dependent Ca2+ influx and Rho GTPases signal transduction, subsequently leading to the assembly of cortical actomyosin fibers and myotube formation (PubMed:29799007). May be involved in the uptake of farnesyltransferase inhibitor drugs, such as lonafarnib.</text>
</comment>
<comment type="catalytic activity">
    <reaction evidence="9 10 11 13">
        <text>ATP + H2O + phospholipidSide 1 = ADP + phosphate + phospholipidSide 2.</text>
        <dbReference type="EC" id="7.6.2.1"/>
    </reaction>
</comment>
<comment type="catalytic activity">
    <reaction evidence="9 10 11 13">
        <text>a 1,2-diacyl-sn-glycero-3-phospho-L-serine(out) + ATP + H2O = a 1,2-diacyl-sn-glycero-3-phospho-L-serine(in) + ADP + phosphate + H(+)</text>
        <dbReference type="Rhea" id="RHEA:38567"/>
        <dbReference type="ChEBI" id="CHEBI:15377"/>
        <dbReference type="ChEBI" id="CHEBI:15378"/>
        <dbReference type="ChEBI" id="CHEBI:30616"/>
        <dbReference type="ChEBI" id="CHEBI:43474"/>
        <dbReference type="ChEBI" id="CHEBI:57262"/>
        <dbReference type="ChEBI" id="CHEBI:456216"/>
    </reaction>
    <physiologicalReaction direction="left-to-right" evidence="18 19 20 21">
        <dbReference type="Rhea" id="RHEA:38568"/>
    </physiologicalReaction>
</comment>
<comment type="catalytic activity">
    <reaction evidence="9 10 11 13">
        <text>a 1,2-diacyl-sn-glycero-3-phosphoethanolamine(out) + ATP + H2O = a 1,2-diacyl-sn-glycero-3-phosphoethanolamine(in) + ADP + phosphate + H(+)</text>
        <dbReference type="Rhea" id="RHEA:66132"/>
        <dbReference type="ChEBI" id="CHEBI:15377"/>
        <dbReference type="ChEBI" id="CHEBI:15378"/>
        <dbReference type="ChEBI" id="CHEBI:30616"/>
        <dbReference type="ChEBI" id="CHEBI:43474"/>
        <dbReference type="ChEBI" id="CHEBI:64612"/>
        <dbReference type="ChEBI" id="CHEBI:456216"/>
    </reaction>
    <physiologicalReaction direction="left-to-right" evidence="18 19 20 21">
        <dbReference type="Rhea" id="RHEA:66133"/>
    </physiologicalReaction>
</comment>
<comment type="cofactor">
    <cofactor evidence="4">
        <name>Mg(2+)</name>
        <dbReference type="ChEBI" id="CHEBI:18420"/>
    </cofactor>
</comment>
<comment type="activity regulation">
    <text evidence="11 13">The flippase activity is inactivated by caspase-mediated cleavage in apoptotic cells, allowing for PS exposure on the cell surface and engulfment of apoptotic cells by macrophages. The ATPase activity is up-regulated by aminophospholipids PS and PE and down-regulated by increasing intracellular Ca2+ levels.</text>
</comment>
<comment type="biophysicochemical properties">
    <kinetics>
        <KM evidence="11">1.9 uM for ATP (in the presence of PS)</KM>
        <KM evidence="11">6.1 uM for ATP (in the presence of PE)</KM>
        <Vmax evidence="11">6.5 nmol/min/ug enzyme toward ATP (in the presence of PS)</Vmax>
        <Vmax evidence="11">4.9 nmol/min/ug enzyme toward ATP (in the presence of PE)</Vmax>
    </kinetics>
</comment>
<comment type="subunit">
    <text evidence="8 10 12">Component of a P4-ATPase flippase complex which consists of a catalytic alpha subunit ATP11A and an accessory beta subunit TMEM30A.</text>
</comment>
<comment type="interaction">
    <interactant intactId="EBI-21519640">
        <id>P98196</id>
    </interactant>
    <interactant intactId="EBI-2836942">
        <id>Q9NV96</id>
        <label>TMEM30A</label>
    </interactant>
    <organismsDiffer>false</organismsDiffer>
    <experiments>5</experiments>
</comment>
<comment type="subcellular location">
    <subcellularLocation>
        <location evidence="8 9 10 14 16">Cell membrane</location>
        <topology evidence="5">Multi-pass membrane protein</topology>
    </subcellularLocation>
    <subcellularLocation>
        <location evidence="8">Early endosome</location>
    </subcellularLocation>
    <subcellularLocation>
        <location evidence="8">Recycling endosome</location>
    </subcellularLocation>
    <subcellularLocation>
        <location evidence="8 9 10">Endoplasmic reticulum membrane</location>
        <topology evidence="5">Multi-pass membrane protein</topology>
    </subcellularLocation>
    <text evidence="9 10">Efficient exit from the endoplasmic reticulum requires the presence of TMEM30A.</text>
</comment>
<comment type="tissue specificity">
    <text evidence="11 12">Widely expressed (PubMed:26567335). Expressed in myoblasts (PubMed:29799007).</text>
</comment>
<comment type="PTM">
    <text evidence="11">Proteolytically cleaved by CASP3.</text>
</comment>
<comment type="disease" evidence="15">
    <disease id="DI-06385">
        <name>Deafness, autosomal dominant, 84</name>
        <acronym>DFNA84</acronym>
        <description>A form of non-syndromic, sensorineural hearing loss. Sensorineural hearing loss results from damage to the neural receptors of the inner ear, the nerve pathways to the brain, or the area of the brain that receives sound information. DFNA84 is characterized by slowly progressive, postlingual hearing loss.</description>
        <dbReference type="MIM" id="619810"/>
    </disease>
    <text>The disease is caused by variants affecting the gene represented in this entry.</text>
</comment>
<comment type="disease" evidence="14">
    <disease id="DI-06405">
        <name>Leukodystrophy, hypomyelinating, 24</name>
        <acronym>HLD24</acronym>
        <description>An autosomal dominant disorder characterized by global developmental delay apparent in infancy, impaired intellectual development, and loss of developmental milestones and ambulation. Brain imaging shows non-progressive severe cerebral atrophy, ventriculomegaly, hypomyelinating leukodystrophy, and thinning of the corpus callosum.</description>
        <dbReference type="MIM" id="619851"/>
    </disease>
    <text>The disease is caused by variants affecting the gene represented in this entry.</text>
</comment>
<comment type="disease" evidence="16">
    <disease id="DI-06691">
        <name>Auditory neuropathy, autosomal dominant 2</name>
        <acronym>AUNA2</acronym>
        <description>A form of sensorineural hearing loss with absent or severely abnormal auditory brainstem response, in the presence of normal cochlear outer hair cell function and normal otoacoustic emissions. Auditory neuropathies result from a lesion in the area including the inner hair cells, connections between the inner hair cells and the cochlear branch of the auditory nerve, the auditory nerve itself and auditory pathways of the brainstem. Affected individuals typically respond to sound but have difficulties in speech discrimination. AUNA2 is characterized by postlingual onset of progressive bilateral sensorineural hearing loss in the second decade, leading to profound deafness in the fifth decade. The outer hair cell function is preserved initially but declines with age.</description>
        <dbReference type="MIM" id="620384"/>
    </disease>
    <text>The disease may be caused by variants affecting the gene represented in this entry.</text>
</comment>
<comment type="miscellaneous">
    <text>Overexpression of ATP11A confers resistance to lonafarnib.</text>
</comment>
<comment type="similarity">
    <text evidence="17">Belongs to the cation transport ATPase (P-type) (TC 3.A.3) family. Type IV subfamily.</text>
</comment>
<accession>P98196</accession>
<accession>Q5VXT2</accession>
<evidence type="ECO:0000250" key="1">
    <source>
        <dbReference type="UniProtKB" id="P04191"/>
    </source>
</evidence>
<evidence type="ECO:0000250" key="2">
    <source>
        <dbReference type="UniProtKB" id="Q8NB49"/>
    </source>
</evidence>
<evidence type="ECO:0000250" key="3">
    <source>
        <dbReference type="UniProtKB" id="Q9HD20"/>
    </source>
</evidence>
<evidence type="ECO:0000250" key="4">
    <source>
        <dbReference type="UniProtKB" id="Q9Y2Q0"/>
    </source>
</evidence>
<evidence type="ECO:0000255" key="5"/>
<evidence type="ECO:0000269" key="6">
    <source>
    </source>
</evidence>
<evidence type="ECO:0000269" key="7">
    <source>
    </source>
</evidence>
<evidence type="ECO:0000269" key="8">
    <source>
    </source>
</evidence>
<evidence type="ECO:0000269" key="9">
    <source>
    </source>
</evidence>
<evidence type="ECO:0000269" key="10">
    <source>
    </source>
</evidence>
<evidence type="ECO:0000269" key="11">
    <source>
    </source>
</evidence>
<evidence type="ECO:0000269" key="12">
    <source>
    </source>
</evidence>
<evidence type="ECO:0000269" key="13">
    <source>
    </source>
</evidence>
<evidence type="ECO:0000269" key="14">
    <source>
    </source>
</evidence>
<evidence type="ECO:0000269" key="15">
    <source>
    </source>
</evidence>
<evidence type="ECO:0000269" key="16">
    <source>
    </source>
</evidence>
<evidence type="ECO:0000305" key="17"/>
<evidence type="ECO:0000305" key="18">
    <source>
    </source>
</evidence>
<evidence type="ECO:0000305" key="19">
    <source>
    </source>
</evidence>
<evidence type="ECO:0000305" key="20">
    <source>
    </source>
</evidence>
<evidence type="ECO:0000305" key="21">
    <source>
    </source>
</evidence>
<evidence type="ECO:0007744" key="22">
    <source>
    </source>
</evidence>
<protein>
    <recommendedName>
        <fullName>Phospholipid-transporting ATPase IH</fullName>
        <ecNumber evidence="9 10 11 13">7.6.2.1</ecNumber>
    </recommendedName>
    <alternativeName>
        <fullName>ATPase IS</fullName>
    </alternativeName>
    <alternativeName>
        <fullName>ATPase class VI type 11A</fullName>
    </alternativeName>
    <alternativeName>
        <fullName>P4-ATPase flippase complex alpha subunit ATP11A</fullName>
    </alternativeName>
</protein>
<reference key="1">
    <citation type="journal article" date="2004" name="Nature">
        <title>The DNA sequence and analysis of human chromosome 13.</title>
        <authorList>
            <person name="Dunham A."/>
            <person name="Matthews L.H."/>
            <person name="Burton J."/>
            <person name="Ashurst J.L."/>
            <person name="Howe K.L."/>
            <person name="Ashcroft K.J."/>
            <person name="Beare D.M."/>
            <person name="Burford D.C."/>
            <person name="Hunt S.E."/>
            <person name="Griffiths-Jones S."/>
            <person name="Jones M.C."/>
            <person name="Keenan S.J."/>
            <person name="Oliver K."/>
            <person name="Scott C.E."/>
            <person name="Ainscough R."/>
            <person name="Almeida J.P."/>
            <person name="Ambrose K.D."/>
            <person name="Andrews D.T."/>
            <person name="Ashwell R.I.S."/>
            <person name="Babbage A.K."/>
            <person name="Bagguley C.L."/>
            <person name="Bailey J."/>
            <person name="Bannerjee R."/>
            <person name="Barlow K.F."/>
            <person name="Bates K."/>
            <person name="Beasley H."/>
            <person name="Bird C.P."/>
            <person name="Bray-Allen S."/>
            <person name="Brown A.J."/>
            <person name="Brown J.Y."/>
            <person name="Burrill W."/>
            <person name="Carder C."/>
            <person name="Carter N.P."/>
            <person name="Chapman J.C."/>
            <person name="Clamp M.E."/>
            <person name="Clark S.Y."/>
            <person name="Clarke G."/>
            <person name="Clee C.M."/>
            <person name="Clegg S.C."/>
            <person name="Cobley V."/>
            <person name="Collins J.E."/>
            <person name="Corby N."/>
            <person name="Coville G.J."/>
            <person name="Deloukas P."/>
            <person name="Dhami P."/>
            <person name="Dunham I."/>
            <person name="Dunn M."/>
            <person name="Earthrowl M.E."/>
            <person name="Ellington A.G."/>
            <person name="Faulkner L."/>
            <person name="Frankish A.G."/>
            <person name="Frankland J."/>
            <person name="French L."/>
            <person name="Garner P."/>
            <person name="Garnett J."/>
            <person name="Gilbert J.G.R."/>
            <person name="Gilson C.J."/>
            <person name="Ghori J."/>
            <person name="Grafham D.V."/>
            <person name="Gribble S.M."/>
            <person name="Griffiths C."/>
            <person name="Hall R.E."/>
            <person name="Hammond S."/>
            <person name="Harley J.L."/>
            <person name="Hart E.A."/>
            <person name="Heath P.D."/>
            <person name="Howden P.J."/>
            <person name="Huckle E.J."/>
            <person name="Hunt P.J."/>
            <person name="Hunt A.R."/>
            <person name="Johnson C."/>
            <person name="Johnson D."/>
            <person name="Kay M."/>
            <person name="Kimberley A.M."/>
            <person name="King A."/>
            <person name="Laird G.K."/>
            <person name="Langford C.J."/>
            <person name="Lawlor S."/>
            <person name="Leongamornlert D.A."/>
            <person name="Lloyd D.M."/>
            <person name="Lloyd C."/>
            <person name="Loveland J.E."/>
            <person name="Lovell J."/>
            <person name="Martin S."/>
            <person name="Mashreghi-Mohammadi M."/>
            <person name="McLaren S.J."/>
            <person name="McMurray A."/>
            <person name="Milne S."/>
            <person name="Moore M.J.F."/>
            <person name="Nickerson T."/>
            <person name="Palmer S.A."/>
            <person name="Pearce A.V."/>
            <person name="Peck A.I."/>
            <person name="Pelan S."/>
            <person name="Phillimore B."/>
            <person name="Porter K.M."/>
            <person name="Rice C.M."/>
            <person name="Searle S."/>
            <person name="Sehra H.K."/>
            <person name="Shownkeen R."/>
            <person name="Skuce C.D."/>
            <person name="Smith M."/>
            <person name="Steward C.A."/>
            <person name="Sycamore N."/>
            <person name="Tester J."/>
            <person name="Thomas D.W."/>
            <person name="Tracey A."/>
            <person name="Tromans A."/>
            <person name="Tubby B."/>
            <person name="Wall M."/>
            <person name="Wallis J.M."/>
            <person name="West A.P."/>
            <person name="Whitehead S.L."/>
            <person name="Willey D.L."/>
            <person name="Wilming L."/>
            <person name="Wray P.W."/>
            <person name="Wright M.W."/>
            <person name="Young L."/>
            <person name="Coulson A."/>
            <person name="Durbin R.M."/>
            <person name="Hubbard T."/>
            <person name="Sulston J.E."/>
            <person name="Beck S."/>
            <person name="Bentley D.R."/>
            <person name="Rogers J."/>
            <person name="Ross M.T."/>
        </authorList>
    </citation>
    <scope>NUCLEOTIDE SEQUENCE [LARGE SCALE GENOMIC DNA]</scope>
</reference>
<reference key="2">
    <citation type="journal article" date="1999" name="DNA Res.">
        <title>Prediction of the coding sequences of unidentified human genes. XIV. The complete sequences of 100 new cDNA clones from brain which code for large proteins in vitro.</title>
        <authorList>
            <person name="Kikuno R."/>
            <person name="Nagase T."/>
            <person name="Ishikawa K."/>
            <person name="Hirosawa M."/>
            <person name="Miyajima N."/>
            <person name="Tanaka A."/>
            <person name="Kotani H."/>
            <person name="Nomura N."/>
            <person name="Ohara O."/>
        </authorList>
    </citation>
    <scope>NUCLEOTIDE SEQUENCE [LARGE SCALE MRNA] OF 33-1134</scope>
    <scope>VARIANT VAL-317</scope>
    <source>
        <tissue>Brain</tissue>
    </source>
</reference>
<reference key="3">
    <citation type="submission" date="2005-08" db="EMBL/GenBank/DDBJ databases">
        <authorList>
            <person name="Ohara O."/>
            <person name="Nagase T."/>
            <person name="Kikuno R."/>
        </authorList>
    </citation>
    <scope>SEQUENCE REVISION</scope>
</reference>
<reference key="4">
    <citation type="journal article" date="2005" name="Blood">
        <title>Resistance to farnesyltransferase inhibitors in Bcr/Abl-positive lymphoblastic leukemia by increased expression of a novel ABC transporter homolog ATP11a.</title>
        <authorList>
            <person name="Zhang B."/>
            <person name="Groffen J."/>
            <person name="Heisterkamp N."/>
        </authorList>
    </citation>
    <scope>FUNCTION</scope>
</reference>
<reference key="5">
    <citation type="journal article" date="2011" name="J. Biol. Chem.">
        <title>ATP9B, a P4-ATPase (a putative aminophospholipid translocase), localizes to the trans-Golgi network in a CDC50 protein-independent manner.</title>
        <authorList>
            <person name="Takatsu H."/>
            <person name="Baba K."/>
            <person name="Shima T."/>
            <person name="Umino H."/>
            <person name="Kato U."/>
            <person name="Umeda M."/>
            <person name="Nakayama K."/>
            <person name="Shin H.W."/>
        </authorList>
    </citation>
    <scope>INTERACTION WITH TMEM30A</scope>
    <scope>SUBCELLULAR LOCATION</scope>
</reference>
<reference key="6">
    <citation type="journal article" date="2013" name="J. Proteome Res.">
        <title>Toward a comprehensive characterization of a human cancer cell phosphoproteome.</title>
        <authorList>
            <person name="Zhou H."/>
            <person name="Di Palma S."/>
            <person name="Preisinger C."/>
            <person name="Peng M."/>
            <person name="Polat A.N."/>
            <person name="Heck A.J."/>
            <person name="Mohammed S."/>
        </authorList>
    </citation>
    <scope>PHOSPHORYLATION [LARGE SCALE ANALYSIS] AT SER-738</scope>
    <scope>IDENTIFICATION BY MASS SPECTROMETRY [LARGE SCALE ANALYSIS]</scope>
    <source>
        <tissue>Cervix carcinoma</tissue>
    </source>
</reference>
<reference key="7">
    <citation type="journal article" date="2014" name="J. Biol. Chem.">
        <title>Phospholipid flippase activities and substrate specificities of human type IV P-type ATPases localized to the plasma membrane.</title>
        <authorList>
            <person name="Takatsu H."/>
            <person name="Tanaka G."/>
            <person name="Segawa K."/>
            <person name="Suzuki J."/>
            <person name="Nagata S."/>
            <person name="Nakayama K."/>
            <person name="Shin H.W."/>
        </authorList>
    </citation>
    <scope>FUNCTION</scope>
    <scope>CATALYTIC ACTIVITY</scope>
    <scope>SUBCELLULAR LOCATION</scope>
    <scope>MUTAGENESIS OF GLU-186 AND ASP-414</scope>
</reference>
<reference key="8">
    <citation type="journal article" date="2015" name="J. Biol. Chem.">
        <title>Phospholipid Flippase ATP10A Translocates Phosphatidylcholine and Is Involved in Plasma Membrane Dynamics.</title>
        <authorList>
            <person name="Naito T."/>
            <person name="Takatsu H."/>
            <person name="Miyano R."/>
            <person name="Takada N."/>
            <person name="Nakayama K."/>
            <person name="Shin H.W."/>
        </authorList>
    </citation>
    <scope>FUNCTION</scope>
    <scope>CATALYTIC ACTIVITY</scope>
    <scope>SUBCELLULAR LOCATION</scope>
    <scope>INTERACTION WITH TMEM30A</scope>
    <scope>MUTAGENESIS OF GLU-186</scope>
</reference>
<reference key="9">
    <citation type="journal article" date="2016" name="J. Biol. Chem.">
        <title>Human Type IV P-type ATPases That Work as Plasma Membrane Phospholipid Flippases and Their Regulation by Caspase and Calcium.</title>
        <authorList>
            <person name="Segawa K."/>
            <person name="Kurata S."/>
            <person name="Nagata S."/>
        </authorList>
    </citation>
    <scope>FUNCTION</scope>
    <scope>CATALYTIC ACTIVITY</scope>
    <scope>ACTIVITY REGULATION</scope>
    <scope>BIOPHYSICOCHEMICAL PROPERTIES</scope>
    <scope>PROTEOLYTIC CLEAVAGE</scope>
    <scope>MUTAGENESIS OF ASP-454; ASP-457; ASP-487 AND ASP-490</scope>
    <scope>TISSUE SPECIFICITY</scope>
</reference>
<reference key="10">
    <citation type="journal article" date="2018" name="Nat. Commun.">
        <title>Cell surface flip-flop of phosphatidylserine is critical for PIEZO1-mediated myotube formation.</title>
        <authorList>
            <person name="Tsuchiya M."/>
            <person name="Hara Y."/>
            <person name="Okuda M."/>
            <person name="Itoh K."/>
            <person name="Nishioka R."/>
            <person name="Shiomi A."/>
            <person name="Nagao K."/>
            <person name="Mori M."/>
            <person name="Mori Y."/>
            <person name="Ikenouchi J."/>
            <person name="Suzuki R."/>
            <person name="Tanaka M."/>
            <person name="Ohwada T."/>
            <person name="Aoki J."/>
            <person name="Kanagawa M."/>
            <person name="Toda T."/>
            <person name="Nagata Y."/>
            <person name="Matsuda R."/>
            <person name="Takayama Y."/>
            <person name="Tominaga M."/>
            <person name="Umeda M."/>
        </authorList>
    </citation>
    <scope>FUNCTION</scope>
    <scope>INTERACTION WITH TMEM30A</scope>
    <scope>TISSUE SPECIFICITY</scope>
</reference>
<reference key="11">
    <citation type="journal article" date="2018" name="Sci. Rep.">
        <title>Proteomic Analysis and Functional Characterization of P4-ATPase Phospholipid Flippases from Murine Tissues.</title>
        <authorList>
            <person name="Wang J."/>
            <person name="Molday L.L."/>
            <person name="Hii T."/>
            <person name="Coleman J.A."/>
            <person name="Wen T."/>
            <person name="Andersen J.P."/>
            <person name="Molday R.S."/>
        </authorList>
    </citation>
    <scope>FUNCTION</scope>
    <scope>CATALYTIC ACTIVITY</scope>
    <scope>ACTIVITY REGULATION</scope>
    <scope>MUTAGENESIS OF GLU-186</scope>
</reference>
<reference key="12">
    <citation type="journal article" date="2021" name="J. Clin. Invest.">
        <title>A sublethal ATP11A mutation associated with neurological deterioration causes aberrant phosphatidylcholine flipping in plasma membranes.</title>
        <authorList>
            <person name="Segawa K."/>
            <person name="Kikuchi A."/>
            <person name="Noji T."/>
            <person name="Sugiura Y."/>
            <person name="Hiraga K."/>
            <person name="Suzuki C."/>
            <person name="Haginoya K."/>
            <person name="Kobayashi Y."/>
            <person name="Matsunaga M."/>
            <person name="Ochiai Y."/>
            <person name="Yamada K."/>
            <person name="Nishimura T."/>
            <person name="Iwasawa S."/>
            <person name="Shoji W."/>
            <person name="Sugihara F."/>
            <person name="Nishino K."/>
            <person name="Kosako H."/>
            <person name="Ikawa M."/>
            <person name="Uchiyama Y."/>
            <person name="Suematsu M."/>
            <person name="Ishikita H."/>
            <person name="Kure S."/>
            <person name="Nagata S."/>
        </authorList>
    </citation>
    <scope>VARIANT HLD24 GLU-84</scope>
    <scope>CHARACTERIZATION OF VARIANT HLD24 GLU-84</scope>
    <scope>INVOLVEMENT IN HLD24</scope>
    <scope>FUNCTION</scope>
    <scope>SUBCELLULAR LOCATION</scope>
    <scope>MUTAGENESIS OF GLN-84</scope>
</reference>
<reference key="13">
    <citation type="journal article" date="2022" name="Hum. Genet.">
        <title>Autosomal dominant non-syndromic hearing loss maps to DFNA33 (13q34) and co-segregates with splice and frameshift variants in ATP11A, a phospholipid flippase gene.</title>
        <authorList>
            <person name="Pater J.A."/>
            <person name="Penney C."/>
            <person name="O'Rielly D.D."/>
            <person name="Griffin A."/>
            <person name="Kamal L."/>
            <person name="Brownstein Z."/>
            <person name="Vona B."/>
            <person name="Vinkler C."/>
            <person name="Shohat M."/>
            <person name="Barel O."/>
            <person name="French C.R."/>
            <person name="Singh S."/>
            <person name="Werdyani S."/>
            <person name="Burt T."/>
            <person name="Abdelfatah N."/>
            <person name="Houston J."/>
            <person name="Doucette L.P."/>
            <person name="Squires J."/>
            <person name="Glaser F."/>
            <person name="Roslin N.M."/>
            <person name="Vincent D."/>
            <person name="Marquis P."/>
            <person name="Woodland G."/>
            <person name="Benoukraf T."/>
            <person name="Hawkey-Noble A."/>
            <person name="Avraham K.B."/>
            <person name="Stanton S.G."/>
            <person name="Young T.L."/>
        </authorList>
    </citation>
    <scope>INVOLVEMENT IN DFNA84</scope>
</reference>
<reference key="14">
    <citation type="journal article" date="2023" name="Hum. Mol. Genet.">
        <title>A mutation in ATP11A causes autosomal-dominant auditory neuropathy type 2.</title>
        <authorList>
            <person name="Chepurwar S."/>
            <person name="von Loh S.M."/>
            <person name="Wigger D.C."/>
            <person name="Neef J."/>
            <person name="Frommolt P."/>
            <person name="Beutner D."/>
            <person name="Lang-Roth R."/>
            <person name="Kubisch C."/>
            <person name="Strenzke N."/>
            <person name="Volk A.E."/>
        </authorList>
    </citation>
    <scope>INVOLVEMENT IN AUNA2</scope>
    <scope>FUNCTION</scope>
    <scope>SUBCELLULAR LOCATION</scope>
    <scope>MUTAGENESIS OF GLU-186</scope>
</reference>
<feature type="chain" id="PRO_0000046369" description="Phospholipid-transporting ATPase IH">
    <location>
        <begin position="1"/>
        <end position="1134"/>
    </location>
</feature>
<feature type="topological domain" description="Cytoplasmic" evidence="5">
    <location>
        <begin position="1"/>
        <end position="61"/>
    </location>
</feature>
<feature type="transmembrane region" description="Helical" evidence="5">
    <location>
        <begin position="62"/>
        <end position="82"/>
    </location>
</feature>
<feature type="topological domain" description="Extracellular" evidence="5">
    <location>
        <begin position="83"/>
        <end position="88"/>
    </location>
</feature>
<feature type="transmembrane region" description="Helical" evidence="5">
    <location>
        <begin position="89"/>
        <end position="110"/>
    </location>
</feature>
<feature type="topological domain" description="Cytoplasmic" evidence="5">
    <location>
        <begin position="111"/>
        <end position="296"/>
    </location>
</feature>
<feature type="transmembrane region" description="Helical" evidence="5">
    <location>
        <begin position="297"/>
        <end position="318"/>
    </location>
</feature>
<feature type="topological domain" description="Extracellular" evidence="5">
    <location>
        <begin position="319"/>
        <end position="349"/>
    </location>
</feature>
<feature type="transmembrane region" description="Helical" evidence="5">
    <location>
        <begin position="350"/>
        <end position="372"/>
    </location>
</feature>
<feature type="topological domain" description="Cytoplasmic" evidence="5">
    <location>
        <begin position="373"/>
        <end position="881"/>
    </location>
</feature>
<feature type="transmembrane region" description="Helical" evidence="5">
    <location>
        <begin position="882"/>
        <end position="902"/>
    </location>
</feature>
<feature type="topological domain" description="Extracellular" evidence="5">
    <location>
        <begin position="903"/>
        <end position="914"/>
    </location>
</feature>
<feature type="transmembrane region" description="Helical" evidence="5">
    <location>
        <begin position="915"/>
        <end position="934"/>
    </location>
</feature>
<feature type="topological domain" description="Cytoplasmic" evidence="5">
    <location>
        <begin position="935"/>
        <end position="964"/>
    </location>
</feature>
<feature type="transmembrane region" description="Helical" evidence="5">
    <location>
        <begin position="965"/>
        <end position="986"/>
    </location>
</feature>
<feature type="topological domain" description="Extracellular" evidence="5">
    <location>
        <begin position="987"/>
        <end position="1000"/>
    </location>
</feature>
<feature type="transmembrane region" description="Helical" evidence="5">
    <location>
        <begin position="1001"/>
        <end position="1023"/>
    </location>
</feature>
<feature type="topological domain" description="Cytoplasmic" evidence="5">
    <location>
        <begin position="1024"/>
        <end position="1029"/>
    </location>
</feature>
<feature type="transmembrane region" description="Helical" evidence="5">
    <location>
        <begin position="1030"/>
        <end position="1050"/>
    </location>
</feature>
<feature type="topological domain" description="Extracellular" evidence="5">
    <location>
        <begin position="1051"/>
        <end position="1068"/>
    </location>
</feature>
<feature type="transmembrane region" description="Helical" evidence="5">
    <location>
        <begin position="1069"/>
        <end position="1093"/>
    </location>
</feature>
<feature type="topological domain" description="Cytoplasmic" evidence="5">
    <location>
        <begin position="1094"/>
        <end position="1134"/>
    </location>
</feature>
<feature type="active site" description="4-aspartylphosphate intermediate" evidence="3">
    <location>
        <position position="414"/>
    </location>
</feature>
<feature type="binding site" evidence="4">
    <location>
        <position position="414"/>
    </location>
    <ligand>
        <name>ATP</name>
        <dbReference type="ChEBI" id="CHEBI:30616"/>
    </ligand>
</feature>
<feature type="binding site" evidence="4">
    <location>
        <position position="414"/>
    </location>
    <ligand>
        <name>Mg(2+)</name>
        <dbReference type="ChEBI" id="CHEBI:18420"/>
    </ligand>
</feature>
<feature type="binding site" evidence="4">
    <location>
        <position position="415"/>
    </location>
    <ligand>
        <name>ATP</name>
        <dbReference type="ChEBI" id="CHEBI:30616"/>
    </ligand>
</feature>
<feature type="binding site" evidence="4">
    <location>
        <position position="416"/>
    </location>
    <ligand>
        <name>ATP</name>
        <dbReference type="ChEBI" id="CHEBI:30616"/>
    </ligand>
</feature>
<feature type="binding site" evidence="4">
    <location>
        <position position="416"/>
    </location>
    <ligand>
        <name>Mg(2+)</name>
        <dbReference type="ChEBI" id="CHEBI:18420"/>
    </ligand>
</feature>
<feature type="binding site" evidence="1">
    <location>
        <position position="511"/>
    </location>
    <ligand>
        <name>ATP</name>
        <dbReference type="ChEBI" id="CHEBI:30616"/>
    </ligand>
</feature>
<feature type="binding site" evidence="4">
    <location>
        <position position="553"/>
    </location>
    <ligand>
        <name>ATP</name>
        <dbReference type="ChEBI" id="CHEBI:30616"/>
    </ligand>
</feature>
<feature type="binding site" evidence="1">
    <location>
        <position position="576"/>
    </location>
    <ligand>
        <name>ATP</name>
        <dbReference type="ChEBI" id="CHEBI:30616"/>
    </ligand>
</feature>
<feature type="binding site" evidence="1">
    <location>
        <position position="607"/>
    </location>
    <ligand>
        <name>ATP</name>
        <dbReference type="ChEBI" id="CHEBI:30616"/>
    </ligand>
</feature>
<feature type="binding site" evidence="1">
    <location>
        <position position="687"/>
    </location>
    <ligand>
        <name>ATP</name>
        <dbReference type="ChEBI" id="CHEBI:30616"/>
    </ligand>
</feature>
<feature type="binding site" evidence="1">
    <location>
        <position position="688"/>
    </location>
    <ligand>
        <name>ATP</name>
        <dbReference type="ChEBI" id="CHEBI:30616"/>
    </ligand>
</feature>
<feature type="binding site" evidence="1">
    <location>
        <position position="689"/>
    </location>
    <ligand>
        <name>ATP</name>
        <dbReference type="ChEBI" id="CHEBI:30616"/>
    </ligand>
</feature>
<feature type="binding site" evidence="1">
    <location>
        <position position="798"/>
    </location>
    <ligand>
        <name>ATP</name>
        <dbReference type="ChEBI" id="CHEBI:30616"/>
    </ligand>
</feature>
<feature type="binding site" evidence="1">
    <location>
        <position position="804"/>
    </location>
    <ligand>
        <name>ATP</name>
        <dbReference type="ChEBI" id="CHEBI:30616"/>
    </ligand>
</feature>
<feature type="binding site" evidence="2">
    <location>
        <position position="825"/>
    </location>
    <ligand>
        <name>Mg(2+)</name>
        <dbReference type="ChEBI" id="CHEBI:18420"/>
    </ligand>
</feature>
<feature type="binding site" evidence="4">
    <location>
        <position position="828"/>
    </location>
    <ligand>
        <name>ATP</name>
        <dbReference type="ChEBI" id="CHEBI:30616"/>
    </ligand>
</feature>
<feature type="binding site" evidence="4">
    <location>
        <position position="829"/>
    </location>
    <ligand>
        <name>ATP</name>
        <dbReference type="ChEBI" id="CHEBI:30616"/>
    </ligand>
</feature>
<feature type="binding site" evidence="2">
    <location>
        <position position="829"/>
    </location>
    <ligand>
        <name>Mg(2+)</name>
        <dbReference type="ChEBI" id="CHEBI:18420"/>
    </ligand>
</feature>
<feature type="site" description="Cleavage; by CASP3" evidence="11">
    <location>
        <begin position="457"/>
        <end position="458"/>
    </location>
</feature>
<feature type="site" description="Cleavage; by CASP3" evidence="11">
    <location>
        <begin position="490"/>
        <end position="491"/>
    </location>
</feature>
<feature type="modified residue" description="Phosphoserine" evidence="22">
    <location>
        <position position="738"/>
    </location>
</feature>
<feature type="sequence variant" id="VAR_087099" description="In HLD24; results in altered lipid distribution at the cell membrane characterized by decreased phosphatidylcholine and increased sphingomyelin concentrations in the outer leaflet; affects substrate specificity resulting in novel flippase activity toward phosphatidylcholine; does not affect flippase activity toward phosphatidylserine and phosphatidylethanolamine; does not affect location to the cell membrane." evidence="14">
    <original>Q</original>
    <variation>E</variation>
    <location>
        <position position="84"/>
    </location>
</feature>
<feature type="sequence variant" id="VAR_059139" description="In dbSNP:rs368865." evidence="6">
    <original>M</original>
    <variation>V</variation>
    <location>
        <position position="317"/>
    </location>
</feature>
<feature type="sequence variant" id="VAR_048379" description="In dbSNP:rs11616795.">
    <original>V</original>
    <variation>I</variation>
    <location>
        <position position="1091"/>
    </location>
</feature>
<feature type="mutagenesis site" description="Does not affect flippase activity toward phosphatidylserine. Like the wild type, it is unable to translocate phosphatidylcholine." evidence="14">
    <original>Q</original>
    <variation>A</variation>
    <location>
        <position position="84"/>
    </location>
</feature>
<feature type="mutagenesis site" description="Does not affect flippase activity toward phosphatidylserine. Like the wild type, it is unable to translocate phosphatidylcholine." evidence="14">
    <original>Q</original>
    <variation>D</variation>
    <location>
        <position position="84"/>
    </location>
</feature>
<feature type="mutagenesis site" description="Does not affect flippase activity toward phosphatidylserine. Like the wild type, it is unable to translocate phosphatidylcholine." evidence="14">
    <original>Q</original>
    <variation>N</variation>
    <location>
        <position position="84"/>
    </location>
</feature>
<feature type="mutagenesis site" description="Has no effect on endoplasmic reticulum to plasma membrane trafficking. Impairs flippase activity toward phosphatidylserine and phosphatidylethanolamine." evidence="9 10 13 16">
    <original>E</original>
    <variation>Q</variation>
    <location>
        <position position="186"/>
    </location>
</feature>
<feature type="mutagenesis site" description="Impairs endoplasmic reticulum to plasma membrane trafficking." evidence="9">
    <original>D</original>
    <variation>N</variation>
    <location>
        <position position="414"/>
    </location>
</feature>
<feature type="mutagenesis site" description="Impairs caspase-mediated cleavage; when associated with A-457, A-487 and A-490." evidence="11">
    <original>D</original>
    <variation>A</variation>
    <location>
        <position position="454"/>
    </location>
</feature>
<feature type="mutagenesis site" description="Impairs caspase-mediated cleavage; when associated with A-454, A-487 and A-490." evidence="11">
    <original>D</original>
    <variation>A</variation>
    <location>
        <position position="457"/>
    </location>
</feature>
<feature type="mutagenesis site" description="Impairs caspase-mediated cleavage; when associated with A-454, A-457 and A-490." evidence="11">
    <original>D</original>
    <variation>A</variation>
    <location>
        <position position="487"/>
    </location>
</feature>
<feature type="mutagenesis site" description="Impairs caspase-mediated cleavage; when associated with A-454, A-457 and A-487." evidence="11">
    <original>D</original>
    <variation>A</variation>
    <location>
        <position position="490"/>
    </location>
</feature>
<keyword id="KW-0067">ATP-binding</keyword>
<keyword id="KW-1003">Cell membrane</keyword>
<keyword id="KW-0209">Deafness</keyword>
<keyword id="KW-0225">Disease variant</keyword>
<keyword id="KW-0256">Endoplasmic reticulum</keyword>
<keyword id="KW-0967">Endosome</keyword>
<keyword id="KW-1026">Leukodystrophy</keyword>
<keyword id="KW-0445">Lipid transport</keyword>
<keyword id="KW-0460">Magnesium</keyword>
<keyword id="KW-0472">Membrane</keyword>
<keyword id="KW-0479">Metal-binding</keyword>
<keyword id="KW-0622">Neuropathy</keyword>
<keyword id="KW-1010">Non-syndromic deafness</keyword>
<keyword id="KW-0547">Nucleotide-binding</keyword>
<keyword id="KW-0597">Phosphoprotein</keyword>
<keyword id="KW-1267">Proteomics identification</keyword>
<keyword id="KW-1185">Reference proteome</keyword>
<keyword id="KW-1278">Translocase</keyword>
<keyword id="KW-0812">Transmembrane</keyword>
<keyword id="KW-1133">Transmembrane helix</keyword>
<keyword id="KW-0813">Transport</keyword>
<name>AT11A_HUMAN</name>
<sequence length="1134" mass="129756">MDCSLVRTLVHRYCAGEENWVDSRTIYVGHREPPPGAEAYIPQRYPDNRIVSSKYTFWNFIPKNLFEQFRRVANFYFLIIFLVQLIIDTPTSPVTSGLPLFFVITVTAIKQGYEDWLRHKADNAMNQCPVHFIQHGKLVRKQSRKLRVGDIVMVKEDETFPCDLIFLSSNRGDGTCHVTTASLDGESSHKTHYAVQDTKGFHTEEDIGGLHATIECEQPQPDLYKFVGRINVYSDLNDPVVRPLGSENLLLRGATLKNTEKIFGVAIYTGMETKMALNYQSKSQKRSAVEKSMNAFLIVYLCILISKALINTVLKYMWQSEPFRDEPWYNQKTESERQRNLFLKAFTDFLAFMVLFNYIIPVSMYVTVEMQKFLGSYFITWDEDMFDEETGEGPLVNTSDLNEELGQVEYIFTDKTGTLTENNMEFKECCIEGHVYVPHVICNGQVLPESSGIDMIDSSPSVNGREREELFFRALCLCHTVQVKDDDSVDGPRKSPDGGKSCVYISSSPDEVALVEGVQRLGFTYLRLKDNYMEILNRENHIERFELLEILSFDSVRRRMSVIVKSATGEIYLFCKGADSSIFPRVIEGKVDQIRARVERNAVEGLRTLCVAYKRLIQEEYEGICKLLQAAKVALQDREKKLAEAYEQIEKDLTLLGATAVEDRLQEKAADTIEALQKAGIKVWVLTGDKMETAAATCYACKLFRRNTQLLELTTKRIEEQSLHDVLFELSKTVLRHSGSLTRDNLSGLSADMQDYGLIIDGAALSLIMKPREDGSSGNYRELFLEICRSCSAVLCCRMAPLQKAQIVKLIKFSKEHPITLAIGDGANDVSMILEAHVGIGVIGKEGRQAARNSDYAIPKFKHLKKMLLVHGHFYYIRISELVQYFFYKNVCFIFPQFLYQFFCGFSQQTLYDTAYLTLYNISFTSLPILLYSLMEQHVGIDVLKRDPTLYRDVAKNALLRWRVFIYWTLLGLFDALVFFFGAYFVFENTTVTSNGQIFGNWTFGTLVFTVMVFTVTLKLALDTHYWTWINHFVIWGSLLFYVVFSLLWGGVIWPFLNYQRMYYVFIQMLSSGPAWLAIVLLVTISLLPDVLKKVLCRQLWPTATERVQTKSQCLSVEQSTIFMLSQTSSSLSF</sequence>
<gene>
    <name type="primary">ATP11A</name>
    <name type="synonym">ATPIH</name>
    <name type="synonym">ATPIS</name>
    <name type="synonym">KIAA1021</name>
</gene>
<dbReference type="EC" id="7.6.2.1" evidence="9 10 11 13"/>
<dbReference type="EMBL" id="AL356740">
    <property type="status" value="NOT_ANNOTATED_CDS"/>
    <property type="molecule type" value="Genomic_DNA"/>
</dbReference>
<dbReference type="EMBL" id="AL139384">
    <property type="status" value="NOT_ANNOTATED_CDS"/>
    <property type="molecule type" value="Genomic_DNA"/>
</dbReference>
<dbReference type="EMBL" id="AL356752">
    <property type="status" value="NOT_ANNOTATED_CDS"/>
    <property type="molecule type" value="Genomic_DNA"/>
</dbReference>
<dbReference type="EMBL" id="AB028944">
    <property type="protein sequence ID" value="BAA82973.2"/>
    <property type="molecule type" value="mRNA"/>
</dbReference>
<dbReference type="CCDS" id="CCDS32011.1"/>
<dbReference type="RefSeq" id="NP_056020.2">
    <property type="nucleotide sequence ID" value="NM_015205.3"/>
</dbReference>
<dbReference type="RefSeq" id="NP_115565.3">
    <property type="nucleotide sequence ID" value="NM_032189.3"/>
</dbReference>
<dbReference type="RefSeq" id="XP_005268362.1">
    <property type="nucleotide sequence ID" value="XM_005268305.5"/>
</dbReference>
<dbReference type="RefSeq" id="XP_005268363.1">
    <property type="nucleotide sequence ID" value="XM_005268306.4"/>
</dbReference>
<dbReference type="RefSeq" id="XP_016875981.1">
    <property type="nucleotide sequence ID" value="XM_017020492.2"/>
</dbReference>
<dbReference type="SMR" id="P98196"/>
<dbReference type="BioGRID" id="116854">
    <property type="interactions" value="36"/>
</dbReference>
<dbReference type="ComplexPortal" id="CPX-6310">
    <property type="entry name" value="ATP11A-CDC50A P4-ATPase complex"/>
</dbReference>
<dbReference type="FunCoup" id="P98196">
    <property type="interactions" value="477"/>
</dbReference>
<dbReference type="IntAct" id="P98196">
    <property type="interactions" value="13"/>
</dbReference>
<dbReference type="MINT" id="P98196"/>
<dbReference type="STRING" id="9606.ENSP00000420387"/>
<dbReference type="TCDB" id="3.A.3.8.17">
    <property type="family name" value="the p-type atpase (p-atpase) superfamily"/>
</dbReference>
<dbReference type="iPTMnet" id="P98196"/>
<dbReference type="PhosphoSitePlus" id="P98196"/>
<dbReference type="SwissPalm" id="P98196"/>
<dbReference type="BioMuta" id="ATP11A"/>
<dbReference type="DMDM" id="85700404"/>
<dbReference type="jPOST" id="P98196"/>
<dbReference type="MassIVE" id="P98196"/>
<dbReference type="PaxDb" id="9606-ENSP00000420387"/>
<dbReference type="PeptideAtlas" id="P98196"/>
<dbReference type="ProteomicsDB" id="57826"/>
<dbReference type="Pumba" id="P98196"/>
<dbReference type="Antibodypedia" id="48747">
    <property type="antibodies" value="57 antibodies from 23 providers"/>
</dbReference>
<dbReference type="DNASU" id="23250"/>
<dbReference type="Ensembl" id="ENST00000375645.8">
    <property type="protein sequence ID" value="ENSP00000364796.3"/>
    <property type="gene ID" value="ENSG00000068650.19"/>
</dbReference>
<dbReference type="Ensembl" id="ENST00000487903.5">
    <property type="protein sequence ID" value="ENSP00000420387.1"/>
    <property type="gene ID" value="ENSG00000068650.19"/>
</dbReference>
<dbReference type="GeneID" id="23250"/>
<dbReference type="KEGG" id="hsa:23250"/>
<dbReference type="MANE-Select" id="ENST00000375645.8">
    <property type="protein sequence ID" value="ENSP00000364796.3"/>
    <property type="RefSeq nucleotide sequence ID" value="NM_015205.3"/>
    <property type="RefSeq protein sequence ID" value="NP_056020.2"/>
</dbReference>
<dbReference type="UCSC" id="uc001vsi.4">
    <property type="organism name" value="human"/>
</dbReference>
<dbReference type="AGR" id="HGNC:13552"/>
<dbReference type="CTD" id="23250"/>
<dbReference type="DisGeNET" id="23250"/>
<dbReference type="GeneCards" id="ATP11A"/>
<dbReference type="HGNC" id="HGNC:13552">
    <property type="gene designation" value="ATP11A"/>
</dbReference>
<dbReference type="HPA" id="ENSG00000068650">
    <property type="expression patterns" value="Low tissue specificity"/>
</dbReference>
<dbReference type="MalaCards" id="ATP11A"/>
<dbReference type="MIM" id="605868">
    <property type="type" value="gene"/>
</dbReference>
<dbReference type="MIM" id="619810">
    <property type="type" value="phenotype"/>
</dbReference>
<dbReference type="MIM" id="619851">
    <property type="type" value="phenotype"/>
</dbReference>
<dbReference type="MIM" id="620384">
    <property type="type" value="phenotype"/>
</dbReference>
<dbReference type="neXtProt" id="NX_P98196"/>
<dbReference type="OpenTargets" id="ENSG00000068650"/>
<dbReference type="Orphanet" id="2032">
    <property type="disease" value="Idiopathic pulmonary fibrosis"/>
</dbReference>
<dbReference type="Orphanet" id="90635">
    <property type="disease" value="Rare autosomal dominant non-syndromic sensorineural deafness type DFNA"/>
</dbReference>
<dbReference type="PharmGKB" id="PA25101"/>
<dbReference type="VEuPathDB" id="HostDB:ENSG00000068650"/>
<dbReference type="eggNOG" id="KOG0206">
    <property type="taxonomic scope" value="Eukaryota"/>
</dbReference>
<dbReference type="GeneTree" id="ENSGT00940000157849"/>
<dbReference type="HOGENOM" id="CLU_000846_3_2_1"/>
<dbReference type="InParanoid" id="P98196"/>
<dbReference type="OMA" id="XPFLSYQ"/>
<dbReference type="OrthoDB" id="377733at2759"/>
<dbReference type="PAN-GO" id="P98196">
    <property type="GO annotations" value="6 GO annotations based on evolutionary models"/>
</dbReference>
<dbReference type="PhylomeDB" id="P98196"/>
<dbReference type="TreeFam" id="TF326897"/>
<dbReference type="BRENDA" id="7.6.2.1">
    <property type="organism ID" value="2681"/>
</dbReference>
<dbReference type="PathwayCommons" id="P98196"/>
<dbReference type="Reactome" id="R-HSA-6798695">
    <property type="pathway name" value="Neutrophil degranulation"/>
</dbReference>
<dbReference type="Reactome" id="R-HSA-936837">
    <property type="pathway name" value="Ion transport by P-type ATPases"/>
</dbReference>
<dbReference type="SABIO-RK" id="P98196"/>
<dbReference type="SignaLink" id="P98196"/>
<dbReference type="BioGRID-ORCS" id="23250">
    <property type="hits" value="19 hits in 1159 CRISPR screens"/>
</dbReference>
<dbReference type="ChiTaRS" id="ATP11A">
    <property type="organism name" value="human"/>
</dbReference>
<dbReference type="GenomeRNAi" id="23250"/>
<dbReference type="Pharos" id="P98196">
    <property type="development level" value="Tbio"/>
</dbReference>
<dbReference type="PRO" id="PR:P98196"/>
<dbReference type="Proteomes" id="UP000005640">
    <property type="component" value="Chromosome 13"/>
</dbReference>
<dbReference type="RNAct" id="P98196">
    <property type="molecule type" value="protein"/>
</dbReference>
<dbReference type="Bgee" id="ENSG00000068650">
    <property type="expression patterns" value="Expressed in germinal epithelium of ovary and 187 other cell types or tissues"/>
</dbReference>
<dbReference type="ExpressionAtlas" id="P98196">
    <property type="expression patterns" value="baseline and differential"/>
</dbReference>
<dbReference type="GO" id="GO:0005769">
    <property type="term" value="C:early endosome"/>
    <property type="evidence" value="ECO:0007669"/>
    <property type="project" value="UniProtKB-SubCell"/>
</dbReference>
<dbReference type="GO" id="GO:0005783">
    <property type="term" value="C:endoplasmic reticulum"/>
    <property type="evidence" value="ECO:0000314"/>
    <property type="project" value="UniProtKB"/>
</dbReference>
<dbReference type="GO" id="GO:0005789">
    <property type="term" value="C:endoplasmic reticulum membrane"/>
    <property type="evidence" value="ECO:0007669"/>
    <property type="project" value="UniProtKB-SubCell"/>
</dbReference>
<dbReference type="GO" id="GO:0005794">
    <property type="term" value="C:Golgi apparatus"/>
    <property type="evidence" value="ECO:0000314"/>
    <property type="project" value="HPA"/>
</dbReference>
<dbReference type="GO" id="GO:0043231">
    <property type="term" value="C:intracellular membrane-bounded organelle"/>
    <property type="evidence" value="ECO:0000314"/>
    <property type="project" value="HPA"/>
</dbReference>
<dbReference type="GO" id="GO:0005765">
    <property type="term" value="C:lysosomal membrane"/>
    <property type="evidence" value="ECO:0007005"/>
    <property type="project" value="UniProtKB"/>
</dbReference>
<dbReference type="GO" id="GO:0016020">
    <property type="term" value="C:membrane"/>
    <property type="evidence" value="ECO:0007005"/>
    <property type="project" value="UniProtKB"/>
</dbReference>
<dbReference type="GO" id="GO:1990531">
    <property type="term" value="C:phospholipid-translocating ATPase complex"/>
    <property type="evidence" value="ECO:0000314"/>
    <property type="project" value="UniProtKB"/>
</dbReference>
<dbReference type="GO" id="GO:0005886">
    <property type="term" value="C:plasma membrane"/>
    <property type="evidence" value="ECO:0000314"/>
    <property type="project" value="UniProtKB"/>
</dbReference>
<dbReference type="GO" id="GO:0055037">
    <property type="term" value="C:recycling endosome"/>
    <property type="evidence" value="ECO:0000314"/>
    <property type="project" value="UniProtKB"/>
</dbReference>
<dbReference type="GO" id="GO:0035579">
    <property type="term" value="C:specific granule membrane"/>
    <property type="evidence" value="ECO:0000304"/>
    <property type="project" value="Reactome"/>
</dbReference>
<dbReference type="GO" id="GO:0070821">
    <property type="term" value="C:tertiary granule membrane"/>
    <property type="evidence" value="ECO:0000304"/>
    <property type="project" value="Reactome"/>
</dbReference>
<dbReference type="GO" id="GO:0005524">
    <property type="term" value="F:ATP binding"/>
    <property type="evidence" value="ECO:0007669"/>
    <property type="project" value="UniProtKB-KW"/>
</dbReference>
<dbReference type="GO" id="GO:0016887">
    <property type="term" value="F:ATP hydrolysis activity"/>
    <property type="evidence" value="ECO:0007669"/>
    <property type="project" value="InterPro"/>
</dbReference>
<dbReference type="GO" id="GO:0140326">
    <property type="term" value="F:ATPase-coupled intramembrane lipid transporter activity"/>
    <property type="evidence" value="ECO:0000318"/>
    <property type="project" value="GO_Central"/>
</dbReference>
<dbReference type="GO" id="GO:0000287">
    <property type="term" value="F:magnesium ion binding"/>
    <property type="evidence" value="ECO:0007669"/>
    <property type="project" value="InterPro"/>
</dbReference>
<dbReference type="GO" id="GO:0090555">
    <property type="term" value="F:phosphatidylethanolamine flippase activity"/>
    <property type="evidence" value="ECO:0000314"/>
    <property type="project" value="UniProtKB"/>
</dbReference>
<dbReference type="GO" id="GO:0140346">
    <property type="term" value="F:phosphatidylserine flippase activity"/>
    <property type="evidence" value="ECO:0000314"/>
    <property type="project" value="UniProtKB"/>
</dbReference>
<dbReference type="GO" id="GO:0090556">
    <property type="term" value="F:phosphatidylserine floppase activity"/>
    <property type="evidence" value="ECO:0007669"/>
    <property type="project" value="RHEA"/>
</dbReference>
<dbReference type="GO" id="GO:0045332">
    <property type="term" value="P:phospholipid translocation"/>
    <property type="evidence" value="ECO:0000318"/>
    <property type="project" value="GO_Central"/>
</dbReference>
<dbReference type="GO" id="GO:0010831">
    <property type="term" value="P:positive regulation of myotube differentiation"/>
    <property type="evidence" value="ECO:0000315"/>
    <property type="project" value="UniProtKB"/>
</dbReference>
<dbReference type="GO" id="GO:0097035">
    <property type="term" value="P:regulation of membrane lipid distribution"/>
    <property type="evidence" value="ECO:0000315"/>
    <property type="project" value="UniProtKB"/>
</dbReference>
<dbReference type="CDD" id="cd02073">
    <property type="entry name" value="P-type_ATPase_APLT_Dnf-like"/>
    <property type="match status" value="1"/>
</dbReference>
<dbReference type="FunFam" id="2.70.150.10:FF:000009">
    <property type="entry name" value="Phospholipid-transporting ATPase"/>
    <property type="match status" value="1"/>
</dbReference>
<dbReference type="FunFam" id="3.40.1110.10:FF:000016">
    <property type="entry name" value="Phospholipid-transporting ATPase"/>
    <property type="match status" value="1"/>
</dbReference>
<dbReference type="FunFam" id="3.40.50.1000:FF:000012">
    <property type="entry name" value="Phospholipid-transporting ATPase"/>
    <property type="match status" value="1"/>
</dbReference>
<dbReference type="Gene3D" id="3.40.1110.10">
    <property type="entry name" value="Calcium-transporting ATPase, cytoplasmic domain N"/>
    <property type="match status" value="1"/>
</dbReference>
<dbReference type="Gene3D" id="2.70.150.10">
    <property type="entry name" value="Calcium-transporting ATPase, cytoplasmic transduction domain A"/>
    <property type="match status" value="1"/>
</dbReference>
<dbReference type="Gene3D" id="3.40.50.1000">
    <property type="entry name" value="HAD superfamily/HAD-like"/>
    <property type="match status" value="1"/>
</dbReference>
<dbReference type="InterPro" id="IPR023299">
    <property type="entry name" value="ATPase_P-typ_cyto_dom_N"/>
</dbReference>
<dbReference type="InterPro" id="IPR018303">
    <property type="entry name" value="ATPase_P-typ_P_site"/>
</dbReference>
<dbReference type="InterPro" id="IPR023298">
    <property type="entry name" value="ATPase_P-typ_TM_dom_sf"/>
</dbReference>
<dbReference type="InterPro" id="IPR008250">
    <property type="entry name" value="ATPase_P-typ_transduc_dom_A_sf"/>
</dbReference>
<dbReference type="InterPro" id="IPR036412">
    <property type="entry name" value="HAD-like_sf"/>
</dbReference>
<dbReference type="InterPro" id="IPR023214">
    <property type="entry name" value="HAD_sf"/>
</dbReference>
<dbReference type="InterPro" id="IPR006539">
    <property type="entry name" value="P-type_ATPase_IV"/>
</dbReference>
<dbReference type="InterPro" id="IPR032631">
    <property type="entry name" value="P-type_ATPase_N"/>
</dbReference>
<dbReference type="InterPro" id="IPR001757">
    <property type="entry name" value="P_typ_ATPase"/>
</dbReference>
<dbReference type="InterPro" id="IPR032630">
    <property type="entry name" value="P_typ_ATPase_c"/>
</dbReference>
<dbReference type="InterPro" id="IPR044492">
    <property type="entry name" value="P_typ_ATPase_HD_dom"/>
</dbReference>
<dbReference type="NCBIfam" id="TIGR01652">
    <property type="entry name" value="ATPase-Plipid"/>
    <property type="match status" value="1"/>
</dbReference>
<dbReference type="NCBIfam" id="TIGR01494">
    <property type="entry name" value="ATPase_P-type"/>
    <property type="match status" value="3"/>
</dbReference>
<dbReference type="PANTHER" id="PTHR24092:SF33">
    <property type="entry name" value="PHOSPHOLIPID-TRANSPORTING ATPASE IH"/>
    <property type="match status" value="1"/>
</dbReference>
<dbReference type="PANTHER" id="PTHR24092">
    <property type="entry name" value="PROBABLE PHOSPHOLIPID-TRANSPORTING ATPASE"/>
    <property type="match status" value="1"/>
</dbReference>
<dbReference type="Pfam" id="PF13246">
    <property type="entry name" value="Cation_ATPase"/>
    <property type="match status" value="1"/>
</dbReference>
<dbReference type="Pfam" id="PF00122">
    <property type="entry name" value="E1-E2_ATPase"/>
    <property type="match status" value="1"/>
</dbReference>
<dbReference type="Pfam" id="PF00702">
    <property type="entry name" value="Hydrolase"/>
    <property type="match status" value="1"/>
</dbReference>
<dbReference type="Pfam" id="PF16212">
    <property type="entry name" value="PhoLip_ATPase_C"/>
    <property type="match status" value="1"/>
</dbReference>
<dbReference type="Pfam" id="PF16209">
    <property type="entry name" value="PhoLip_ATPase_N"/>
    <property type="match status" value="1"/>
</dbReference>
<dbReference type="PRINTS" id="PR00119">
    <property type="entry name" value="CATATPASE"/>
</dbReference>
<dbReference type="SFLD" id="SFLDS00003">
    <property type="entry name" value="Haloacid_Dehalogenase"/>
    <property type="match status" value="1"/>
</dbReference>
<dbReference type="SFLD" id="SFLDF00027">
    <property type="entry name" value="p-type_atpase"/>
    <property type="match status" value="1"/>
</dbReference>
<dbReference type="SUPFAM" id="SSF81653">
    <property type="entry name" value="Calcium ATPase, transduction domain A"/>
    <property type="match status" value="1"/>
</dbReference>
<dbReference type="SUPFAM" id="SSF81665">
    <property type="entry name" value="Calcium ATPase, transmembrane domain M"/>
    <property type="match status" value="1"/>
</dbReference>
<dbReference type="SUPFAM" id="SSF56784">
    <property type="entry name" value="HAD-like"/>
    <property type="match status" value="1"/>
</dbReference>
<dbReference type="SUPFAM" id="SSF81660">
    <property type="entry name" value="Metal cation-transporting ATPase, ATP-binding domain N"/>
    <property type="match status" value="1"/>
</dbReference>
<dbReference type="PROSITE" id="PS00154">
    <property type="entry name" value="ATPASE_E1_E2"/>
    <property type="match status" value="1"/>
</dbReference>
<organism>
    <name type="scientific">Homo sapiens</name>
    <name type="common">Human</name>
    <dbReference type="NCBI Taxonomy" id="9606"/>
    <lineage>
        <taxon>Eukaryota</taxon>
        <taxon>Metazoa</taxon>
        <taxon>Chordata</taxon>
        <taxon>Craniata</taxon>
        <taxon>Vertebrata</taxon>
        <taxon>Euteleostomi</taxon>
        <taxon>Mammalia</taxon>
        <taxon>Eutheria</taxon>
        <taxon>Euarchontoglires</taxon>
        <taxon>Primates</taxon>
        <taxon>Haplorrhini</taxon>
        <taxon>Catarrhini</taxon>
        <taxon>Hominidae</taxon>
        <taxon>Homo</taxon>
    </lineage>
</organism>
<proteinExistence type="evidence at protein level"/>